<protein>
    <recommendedName>
        <fullName evidence="1">tRNA (guanine-N(1)-)-methyltransferase</fullName>
        <ecNumber evidence="1">2.1.1.228</ecNumber>
    </recommendedName>
    <alternativeName>
        <fullName evidence="1">M1G-methyltransferase</fullName>
    </alternativeName>
    <alternativeName>
        <fullName evidence="1">tRNA [GM37] methyltransferase</fullName>
    </alternativeName>
</protein>
<feature type="chain" id="PRO_0000060502" description="tRNA (guanine-N(1)-)-methyltransferase">
    <location>
        <begin position="1"/>
        <end position="252"/>
    </location>
</feature>
<feature type="binding site" evidence="1">
    <location>
        <position position="113"/>
    </location>
    <ligand>
        <name>S-adenosyl-L-methionine</name>
        <dbReference type="ChEBI" id="CHEBI:59789"/>
    </ligand>
</feature>
<feature type="binding site" evidence="1">
    <location>
        <begin position="133"/>
        <end position="138"/>
    </location>
    <ligand>
        <name>S-adenosyl-L-methionine</name>
        <dbReference type="ChEBI" id="CHEBI:59789"/>
    </ligand>
</feature>
<dbReference type="EC" id="2.1.1.228" evidence="1"/>
<dbReference type="EMBL" id="CP000050">
    <property type="protein sequence ID" value="AAY50089.1"/>
    <property type="molecule type" value="Genomic_DNA"/>
</dbReference>
<dbReference type="RefSeq" id="WP_011036398.1">
    <property type="nucleotide sequence ID" value="NZ_CP155948.1"/>
</dbReference>
<dbReference type="SMR" id="Q4US84"/>
<dbReference type="KEGG" id="xcb:XC_3041"/>
<dbReference type="HOGENOM" id="CLU_047363_0_1_6"/>
<dbReference type="Proteomes" id="UP000000420">
    <property type="component" value="Chromosome"/>
</dbReference>
<dbReference type="GO" id="GO:0005829">
    <property type="term" value="C:cytosol"/>
    <property type="evidence" value="ECO:0007669"/>
    <property type="project" value="TreeGrafter"/>
</dbReference>
<dbReference type="GO" id="GO:0052906">
    <property type="term" value="F:tRNA (guanine(37)-N1)-methyltransferase activity"/>
    <property type="evidence" value="ECO:0007669"/>
    <property type="project" value="UniProtKB-UniRule"/>
</dbReference>
<dbReference type="GO" id="GO:0002939">
    <property type="term" value="P:tRNA N1-guanine methylation"/>
    <property type="evidence" value="ECO:0007669"/>
    <property type="project" value="TreeGrafter"/>
</dbReference>
<dbReference type="CDD" id="cd18080">
    <property type="entry name" value="TrmD-like"/>
    <property type="match status" value="1"/>
</dbReference>
<dbReference type="FunFam" id="1.10.1270.20:FF:000001">
    <property type="entry name" value="tRNA (guanine-N(1)-)-methyltransferase"/>
    <property type="match status" value="1"/>
</dbReference>
<dbReference type="FunFam" id="3.40.1280.10:FF:000001">
    <property type="entry name" value="tRNA (guanine-N(1)-)-methyltransferase"/>
    <property type="match status" value="1"/>
</dbReference>
<dbReference type="Gene3D" id="3.40.1280.10">
    <property type="match status" value="1"/>
</dbReference>
<dbReference type="Gene3D" id="1.10.1270.20">
    <property type="entry name" value="tRNA(m1g37)methyltransferase, domain 2"/>
    <property type="match status" value="1"/>
</dbReference>
<dbReference type="HAMAP" id="MF_00605">
    <property type="entry name" value="TrmD"/>
    <property type="match status" value="1"/>
</dbReference>
<dbReference type="InterPro" id="IPR029028">
    <property type="entry name" value="Alpha/beta_knot_MTases"/>
</dbReference>
<dbReference type="InterPro" id="IPR023148">
    <property type="entry name" value="tRNA_m1G_MeTrfase_C_sf"/>
</dbReference>
<dbReference type="InterPro" id="IPR002649">
    <property type="entry name" value="tRNA_m1G_MeTrfase_TrmD"/>
</dbReference>
<dbReference type="InterPro" id="IPR029026">
    <property type="entry name" value="tRNA_m1G_MTases_N"/>
</dbReference>
<dbReference type="InterPro" id="IPR016009">
    <property type="entry name" value="tRNA_MeTrfase_TRMD/TRM10"/>
</dbReference>
<dbReference type="NCBIfam" id="NF000648">
    <property type="entry name" value="PRK00026.1"/>
    <property type="match status" value="1"/>
</dbReference>
<dbReference type="NCBIfam" id="TIGR00088">
    <property type="entry name" value="trmD"/>
    <property type="match status" value="1"/>
</dbReference>
<dbReference type="PANTHER" id="PTHR46417">
    <property type="entry name" value="TRNA (GUANINE-N(1)-)-METHYLTRANSFERASE"/>
    <property type="match status" value="1"/>
</dbReference>
<dbReference type="PANTHER" id="PTHR46417:SF1">
    <property type="entry name" value="TRNA (GUANINE-N(1)-)-METHYLTRANSFERASE"/>
    <property type="match status" value="1"/>
</dbReference>
<dbReference type="Pfam" id="PF01746">
    <property type="entry name" value="tRNA_m1G_MT"/>
    <property type="match status" value="1"/>
</dbReference>
<dbReference type="PIRSF" id="PIRSF000386">
    <property type="entry name" value="tRNA_mtase"/>
    <property type="match status" value="1"/>
</dbReference>
<dbReference type="SUPFAM" id="SSF75217">
    <property type="entry name" value="alpha/beta knot"/>
    <property type="match status" value="1"/>
</dbReference>
<sequence>MRIDVISLFPEFIAQCAAFGVVGRAQERGLLELKGWNPRDHAQGNYRRVDDRPFGGGPGMVMLIEPLRACLEVAQAADARPAPVIYLSPQGRPLTQPLARELAQLPRMVLLCGRYEGVDERFLDQAVDMEISIGDYVLSGGELGAAVLVDVVTRLQDGVLNDAESAAQDSFEGPQGLLDCPHYSHPSSHAWGDVPEVLRSGNHGAIARWRRQQSLGRTWLRRPELLDEATLDKQDRRLLEEFRRELAPGDEK</sequence>
<reference key="1">
    <citation type="journal article" date="2005" name="Genome Res.">
        <title>Comparative and functional genomic analyses of the pathogenicity of phytopathogen Xanthomonas campestris pv. campestris.</title>
        <authorList>
            <person name="Qian W."/>
            <person name="Jia Y."/>
            <person name="Ren S.-X."/>
            <person name="He Y.-Q."/>
            <person name="Feng J.-X."/>
            <person name="Lu L.-F."/>
            <person name="Sun Q."/>
            <person name="Ying G."/>
            <person name="Tang D.-J."/>
            <person name="Tang H."/>
            <person name="Wu W."/>
            <person name="Hao P."/>
            <person name="Wang L."/>
            <person name="Jiang B.-L."/>
            <person name="Zeng S."/>
            <person name="Gu W.-Y."/>
            <person name="Lu G."/>
            <person name="Rong L."/>
            <person name="Tian Y."/>
            <person name="Yao Z."/>
            <person name="Fu G."/>
            <person name="Chen B."/>
            <person name="Fang R."/>
            <person name="Qiang B."/>
            <person name="Chen Z."/>
            <person name="Zhao G.-P."/>
            <person name="Tang J.-L."/>
            <person name="He C."/>
        </authorList>
    </citation>
    <scope>NUCLEOTIDE SEQUENCE [LARGE SCALE GENOMIC DNA]</scope>
    <source>
        <strain>8004</strain>
    </source>
</reference>
<proteinExistence type="inferred from homology"/>
<evidence type="ECO:0000255" key="1">
    <source>
        <dbReference type="HAMAP-Rule" id="MF_00605"/>
    </source>
</evidence>
<comment type="function">
    <text evidence="1">Specifically methylates guanosine-37 in various tRNAs.</text>
</comment>
<comment type="catalytic activity">
    <reaction evidence="1">
        <text>guanosine(37) in tRNA + S-adenosyl-L-methionine = N(1)-methylguanosine(37) in tRNA + S-adenosyl-L-homocysteine + H(+)</text>
        <dbReference type="Rhea" id="RHEA:36899"/>
        <dbReference type="Rhea" id="RHEA-COMP:10145"/>
        <dbReference type="Rhea" id="RHEA-COMP:10147"/>
        <dbReference type="ChEBI" id="CHEBI:15378"/>
        <dbReference type="ChEBI" id="CHEBI:57856"/>
        <dbReference type="ChEBI" id="CHEBI:59789"/>
        <dbReference type="ChEBI" id="CHEBI:73542"/>
        <dbReference type="ChEBI" id="CHEBI:74269"/>
        <dbReference type="EC" id="2.1.1.228"/>
    </reaction>
</comment>
<comment type="subunit">
    <text evidence="1">Homodimer.</text>
</comment>
<comment type="subcellular location">
    <subcellularLocation>
        <location evidence="1">Cytoplasm</location>
    </subcellularLocation>
</comment>
<comment type="similarity">
    <text evidence="1">Belongs to the RNA methyltransferase TrmD family.</text>
</comment>
<name>TRMD_XANC8</name>
<organism>
    <name type="scientific">Xanthomonas campestris pv. campestris (strain 8004)</name>
    <dbReference type="NCBI Taxonomy" id="314565"/>
    <lineage>
        <taxon>Bacteria</taxon>
        <taxon>Pseudomonadati</taxon>
        <taxon>Pseudomonadota</taxon>
        <taxon>Gammaproteobacteria</taxon>
        <taxon>Lysobacterales</taxon>
        <taxon>Lysobacteraceae</taxon>
        <taxon>Xanthomonas</taxon>
    </lineage>
</organism>
<keyword id="KW-0963">Cytoplasm</keyword>
<keyword id="KW-0489">Methyltransferase</keyword>
<keyword id="KW-0949">S-adenosyl-L-methionine</keyword>
<keyword id="KW-0808">Transferase</keyword>
<keyword id="KW-0819">tRNA processing</keyword>
<accession>Q4US84</accession>
<gene>
    <name evidence="1" type="primary">trmD</name>
    <name type="ordered locus">XC_3041</name>
</gene>